<keyword id="KW-0028">Amino-acid biosynthesis</keyword>
<keyword id="KW-0963">Cytoplasm</keyword>
<keyword id="KW-0315">Glutamine amidotransferase</keyword>
<keyword id="KW-0368">Histidine biosynthesis</keyword>
<keyword id="KW-0378">Hydrolase</keyword>
<keyword id="KW-0456">Lyase</keyword>
<keyword id="KW-1185">Reference proteome</keyword>
<reference key="1">
    <citation type="journal article" date="2002" name="Proc. Natl. Acad. Sci. U.S.A.">
        <title>Extensive mosaic structure revealed by the complete genome sequence of uropathogenic Escherichia coli.</title>
        <authorList>
            <person name="Welch R.A."/>
            <person name="Burland V."/>
            <person name="Plunkett G. III"/>
            <person name="Redford P."/>
            <person name="Roesch P."/>
            <person name="Rasko D."/>
            <person name="Buckles E.L."/>
            <person name="Liou S.-R."/>
            <person name="Boutin A."/>
            <person name="Hackett J."/>
            <person name="Stroud D."/>
            <person name="Mayhew G.F."/>
            <person name="Rose D.J."/>
            <person name="Zhou S."/>
            <person name="Schwartz D.C."/>
            <person name="Perna N.T."/>
            <person name="Mobley H.L.T."/>
            <person name="Donnenberg M.S."/>
            <person name="Blattner F.R."/>
        </authorList>
    </citation>
    <scope>NUCLEOTIDE SEQUENCE [LARGE SCALE GENOMIC DNA]</scope>
    <source>
        <strain>CFT073 / ATCC 700928 / UPEC</strain>
    </source>
</reference>
<protein>
    <recommendedName>
        <fullName>Imidazole glycerol phosphate synthase subunit HisH</fullName>
        <ecNumber>4.3.2.10</ecNumber>
    </recommendedName>
    <alternativeName>
        <fullName>IGP synthase glutaminase subunit</fullName>
        <ecNumber>3.5.1.2</ecNumber>
    </alternativeName>
    <alternativeName>
        <fullName>IGP synthase subunit HisH</fullName>
    </alternativeName>
    <alternativeName>
        <fullName>ImGP synthase subunit HisH</fullName>
        <shortName>IGPS subunit HisH</shortName>
    </alternativeName>
</protein>
<sequence length="196" mass="21653">MNVVILDTGCANLNSVKSAIARHGYEPKVSRDPDVVLLADKLFLPGVGTAQAAMDQVRERELFDLIKACTQPVLGICLGMQLLGRRSEESNGVDLLGIIDEDVPKMTDFGLPLPHMGWNRVYPQAGNRLFQGIEDGAYFYFVHSYAMPVNPWTIAQCNYGEPFTAAVQKDNFYGVQFHPERSGAAGAKLLKNFLEM</sequence>
<proteinExistence type="inferred from homology"/>
<feature type="chain" id="PRO_0000152374" description="Imidazole glycerol phosphate synthase subunit HisH">
    <location>
        <begin position="1"/>
        <end position="196"/>
    </location>
</feature>
<feature type="domain" description="Glutamine amidotransferase type-1">
    <location>
        <begin position="2"/>
        <end position="196"/>
    </location>
</feature>
<feature type="active site" description="Nucleophile" evidence="1">
    <location>
        <position position="77"/>
    </location>
</feature>
<feature type="active site" evidence="1">
    <location>
        <position position="178"/>
    </location>
</feature>
<feature type="active site" evidence="1">
    <location>
        <position position="180"/>
    </location>
</feature>
<organism>
    <name type="scientific">Escherichia coli O6:H1 (strain CFT073 / ATCC 700928 / UPEC)</name>
    <dbReference type="NCBI Taxonomy" id="199310"/>
    <lineage>
        <taxon>Bacteria</taxon>
        <taxon>Pseudomonadati</taxon>
        <taxon>Pseudomonadota</taxon>
        <taxon>Gammaproteobacteria</taxon>
        <taxon>Enterobacterales</taxon>
        <taxon>Enterobacteriaceae</taxon>
        <taxon>Escherichia</taxon>
    </lineage>
</organism>
<gene>
    <name type="primary">hisH</name>
    <name type="ordered locus">c2550</name>
</gene>
<name>HIS5_ECOL6</name>
<accession>P60596</accession>
<accession>P10375</accession>
<dbReference type="EC" id="4.3.2.10"/>
<dbReference type="EC" id="3.5.1.2"/>
<dbReference type="EMBL" id="AE014075">
    <property type="protein sequence ID" value="AAN81005.1"/>
    <property type="molecule type" value="Genomic_DNA"/>
</dbReference>
<dbReference type="RefSeq" id="WP_001103560.1">
    <property type="nucleotide sequence ID" value="NZ_CP051263.1"/>
</dbReference>
<dbReference type="SMR" id="P60596"/>
<dbReference type="STRING" id="199310.c2550"/>
<dbReference type="GeneID" id="93775150"/>
<dbReference type="KEGG" id="ecc:c2550"/>
<dbReference type="eggNOG" id="COG0118">
    <property type="taxonomic scope" value="Bacteria"/>
</dbReference>
<dbReference type="HOGENOM" id="CLU_071837_0_0_6"/>
<dbReference type="BioCyc" id="ECOL199310:C2550-MONOMER"/>
<dbReference type="UniPathway" id="UPA00031">
    <property type="reaction ID" value="UER00010"/>
</dbReference>
<dbReference type="Proteomes" id="UP000001410">
    <property type="component" value="Chromosome"/>
</dbReference>
<dbReference type="GO" id="GO:0005737">
    <property type="term" value="C:cytoplasm"/>
    <property type="evidence" value="ECO:0007669"/>
    <property type="project" value="UniProtKB-SubCell"/>
</dbReference>
<dbReference type="GO" id="GO:0004359">
    <property type="term" value="F:glutaminase activity"/>
    <property type="evidence" value="ECO:0007669"/>
    <property type="project" value="UniProtKB-EC"/>
</dbReference>
<dbReference type="GO" id="GO:0000107">
    <property type="term" value="F:imidazoleglycerol-phosphate synthase activity"/>
    <property type="evidence" value="ECO:0007669"/>
    <property type="project" value="UniProtKB-UniRule"/>
</dbReference>
<dbReference type="GO" id="GO:0016829">
    <property type="term" value="F:lyase activity"/>
    <property type="evidence" value="ECO:0007669"/>
    <property type="project" value="UniProtKB-KW"/>
</dbReference>
<dbReference type="GO" id="GO:0000105">
    <property type="term" value="P:L-histidine biosynthetic process"/>
    <property type="evidence" value="ECO:0007669"/>
    <property type="project" value="UniProtKB-UniRule"/>
</dbReference>
<dbReference type="CDD" id="cd01748">
    <property type="entry name" value="GATase1_IGP_Synthase"/>
    <property type="match status" value="1"/>
</dbReference>
<dbReference type="FunFam" id="3.40.50.880:FF:000009">
    <property type="entry name" value="Imidazole glycerol phosphate synthase subunit HisH"/>
    <property type="match status" value="1"/>
</dbReference>
<dbReference type="Gene3D" id="3.40.50.880">
    <property type="match status" value="1"/>
</dbReference>
<dbReference type="HAMAP" id="MF_00278">
    <property type="entry name" value="HisH"/>
    <property type="match status" value="1"/>
</dbReference>
<dbReference type="InterPro" id="IPR029062">
    <property type="entry name" value="Class_I_gatase-like"/>
</dbReference>
<dbReference type="InterPro" id="IPR017926">
    <property type="entry name" value="GATASE"/>
</dbReference>
<dbReference type="InterPro" id="IPR010139">
    <property type="entry name" value="Imidazole-glycPsynth_HisH"/>
</dbReference>
<dbReference type="NCBIfam" id="TIGR01855">
    <property type="entry name" value="IMP_synth_hisH"/>
    <property type="match status" value="1"/>
</dbReference>
<dbReference type="PANTHER" id="PTHR42701">
    <property type="entry name" value="IMIDAZOLE GLYCEROL PHOSPHATE SYNTHASE SUBUNIT HISH"/>
    <property type="match status" value="1"/>
</dbReference>
<dbReference type="PANTHER" id="PTHR42701:SF1">
    <property type="entry name" value="IMIDAZOLE GLYCEROL PHOSPHATE SYNTHASE SUBUNIT HISH"/>
    <property type="match status" value="1"/>
</dbReference>
<dbReference type="Pfam" id="PF00117">
    <property type="entry name" value="GATase"/>
    <property type="match status" value="1"/>
</dbReference>
<dbReference type="PIRSF" id="PIRSF000495">
    <property type="entry name" value="Amidotransf_hisH"/>
    <property type="match status" value="1"/>
</dbReference>
<dbReference type="PRINTS" id="PR00096">
    <property type="entry name" value="GATASE"/>
</dbReference>
<dbReference type="SUPFAM" id="SSF52317">
    <property type="entry name" value="Class I glutamine amidotransferase-like"/>
    <property type="match status" value="1"/>
</dbReference>
<dbReference type="PROSITE" id="PS51273">
    <property type="entry name" value="GATASE_TYPE_1"/>
    <property type="match status" value="1"/>
</dbReference>
<evidence type="ECO:0000250" key="1"/>
<comment type="function">
    <text evidence="1">IGPS catalyzes the conversion of PRFAR and glutamine to IGP, AICAR and glutamate. The HisH subunit catalyzes the hydrolysis of glutamine to glutamate and ammonia as part of the synthesis of IGP and AICAR. The resulting ammonia molecule is channeled to the active site of HisF (By similarity).</text>
</comment>
<comment type="catalytic activity">
    <reaction>
        <text>5-[(5-phospho-1-deoxy-D-ribulos-1-ylimino)methylamino]-1-(5-phospho-beta-D-ribosyl)imidazole-4-carboxamide + L-glutamine = D-erythro-1-(imidazol-4-yl)glycerol 3-phosphate + 5-amino-1-(5-phospho-beta-D-ribosyl)imidazole-4-carboxamide + L-glutamate + H(+)</text>
        <dbReference type="Rhea" id="RHEA:24793"/>
        <dbReference type="ChEBI" id="CHEBI:15378"/>
        <dbReference type="ChEBI" id="CHEBI:29985"/>
        <dbReference type="ChEBI" id="CHEBI:58278"/>
        <dbReference type="ChEBI" id="CHEBI:58359"/>
        <dbReference type="ChEBI" id="CHEBI:58475"/>
        <dbReference type="ChEBI" id="CHEBI:58525"/>
        <dbReference type="EC" id="4.3.2.10"/>
    </reaction>
</comment>
<comment type="catalytic activity">
    <reaction>
        <text>L-glutamine + H2O = L-glutamate + NH4(+)</text>
        <dbReference type="Rhea" id="RHEA:15889"/>
        <dbReference type="ChEBI" id="CHEBI:15377"/>
        <dbReference type="ChEBI" id="CHEBI:28938"/>
        <dbReference type="ChEBI" id="CHEBI:29985"/>
        <dbReference type="ChEBI" id="CHEBI:58359"/>
        <dbReference type="EC" id="3.5.1.2"/>
    </reaction>
</comment>
<comment type="pathway">
    <text>Amino-acid biosynthesis; L-histidine biosynthesis; L-histidine from 5-phospho-alpha-D-ribose 1-diphosphate: step 5/9.</text>
</comment>
<comment type="subunit">
    <text evidence="1">Heterodimer of HisH and HisF.</text>
</comment>
<comment type="subcellular location">
    <subcellularLocation>
        <location evidence="1">Cytoplasm</location>
    </subcellularLocation>
</comment>